<proteinExistence type="inferred from homology"/>
<protein>
    <recommendedName>
        <fullName>Basic phospholipase A2 beta-bungarotoxin A-AL4 chain</fullName>
        <shortName>Beta-BuTX A-AL4 chain</shortName>
        <shortName>svPLA2</shortName>
        <ecNumber>3.1.1.4</ecNumber>
    </recommendedName>
    <alternativeName>
        <fullName>Phosphatidylcholine 2-acylhydrolase</fullName>
    </alternativeName>
</protein>
<keyword id="KW-0106">Calcium</keyword>
<keyword id="KW-1015">Disulfide bond</keyword>
<keyword id="KW-0378">Hydrolase</keyword>
<keyword id="KW-0442">Lipid degradation</keyword>
<keyword id="KW-0443">Lipid metabolism</keyword>
<keyword id="KW-0479">Metal-binding</keyword>
<keyword id="KW-0528">Neurotoxin</keyword>
<keyword id="KW-0638">Presynaptic neurotoxin</keyword>
<keyword id="KW-0964">Secreted</keyword>
<keyword id="KW-0732">Signal</keyword>
<keyword id="KW-0800">Toxin</keyword>
<evidence type="ECO:0000250" key="1"/>
<evidence type="ECO:0000250" key="2">
    <source>
        <dbReference type="UniProtKB" id="P00617"/>
    </source>
</evidence>
<evidence type="ECO:0000250" key="3">
    <source>
        <dbReference type="UniProtKB" id="P14418"/>
    </source>
</evidence>
<evidence type="ECO:0000255" key="4">
    <source>
        <dbReference type="PROSITE-ProRule" id="PRU10035"/>
    </source>
</evidence>
<evidence type="ECO:0000255" key="5">
    <source>
        <dbReference type="PROSITE-ProRule" id="PRU10036"/>
    </source>
</evidence>
<evidence type="ECO:0000305" key="6"/>
<evidence type="ECO:0000305" key="7">
    <source>
    </source>
</evidence>
<comment type="function">
    <text evidence="1">Snake venom phospholipase A2 (PLA2) that inhibits neuromuscular transmission by blocking acetylcholine release from the nerve termini. PLA2 catalyzes the calcium-dependent hydrolysis of the 2-acyl groups in 3-sn-phosphoglycerides (By similarity).</text>
</comment>
<comment type="catalytic activity">
    <reaction evidence="4 5">
        <text>a 1,2-diacyl-sn-glycero-3-phosphocholine + H2O = a 1-acyl-sn-glycero-3-phosphocholine + a fatty acid + H(+)</text>
        <dbReference type="Rhea" id="RHEA:15801"/>
        <dbReference type="ChEBI" id="CHEBI:15377"/>
        <dbReference type="ChEBI" id="CHEBI:15378"/>
        <dbReference type="ChEBI" id="CHEBI:28868"/>
        <dbReference type="ChEBI" id="CHEBI:57643"/>
        <dbReference type="ChEBI" id="CHEBI:58168"/>
        <dbReference type="EC" id="3.1.1.4"/>
    </reaction>
</comment>
<comment type="cofactor">
    <cofactor evidence="2">
        <name>Ca(2+)</name>
        <dbReference type="ChEBI" id="CHEBI:29108"/>
    </cofactor>
    <text evidence="2">Binds 1 Ca(2+) ion.</text>
</comment>
<comment type="subunit">
    <text evidence="2">Heterodimer; disulfide-linked. The A chains have phospholipase A2 activity and the B chains show homology with the basic protease inhibitors.</text>
</comment>
<comment type="subcellular location">
    <subcellularLocation>
        <location evidence="2">Secreted</location>
    </subcellularLocation>
</comment>
<comment type="tissue specificity">
    <text evidence="2">Expressed by the venom gland.</text>
</comment>
<comment type="similarity">
    <text evidence="6">Belongs to the phospholipase A2 family. Group I subfamily. D49 sub-subfamily.</text>
</comment>
<reference key="1">
    <citation type="journal article" date="2000" name="Eur. J. Biochem.">
        <title>Genetic organization of A chain and B chain of beta-bungarotoxin from Taiwan banded krait (Bungarus multicinctus). A chain genes and B chain genes do not share a common origin.</title>
        <authorList>
            <person name="Wu P.-F."/>
            <person name="Chang L.-S."/>
        </authorList>
    </citation>
    <scope>NUCLEOTIDE SEQUENCE [GENOMIC DNA]</scope>
    <source>
        <tissue>Liver</tissue>
    </source>
</reference>
<reference key="2">
    <citation type="journal article" date="2001" name="Toxicon">
        <title>What does beta-bungarotoxin do at the neuromuscular junction?</title>
        <authorList>
            <person name="Rowan E.G."/>
        </authorList>
    </citation>
    <scope>REVIEW</scope>
</reference>
<dbReference type="EC" id="3.1.1.4"/>
<dbReference type="EMBL" id="AJ251222">
    <property type="protein sequence ID" value="CAB62502.1"/>
    <property type="molecule type" value="Genomic_DNA"/>
</dbReference>
<dbReference type="SMR" id="Q9PTA5"/>
<dbReference type="GO" id="GO:0005576">
    <property type="term" value="C:extracellular region"/>
    <property type="evidence" value="ECO:0007669"/>
    <property type="project" value="UniProtKB-SubCell"/>
</dbReference>
<dbReference type="GO" id="GO:0005509">
    <property type="term" value="F:calcium ion binding"/>
    <property type="evidence" value="ECO:0007669"/>
    <property type="project" value="InterPro"/>
</dbReference>
<dbReference type="GO" id="GO:0047498">
    <property type="term" value="F:calcium-dependent phospholipase A2 activity"/>
    <property type="evidence" value="ECO:0007669"/>
    <property type="project" value="TreeGrafter"/>
</dbReference>
<dbReference type="GO" id="GO:0005543">
    <property type="term" value="F:phospholipid binding"/>
    <property type="evidence" value="ECO:0007669"/>
    <property type="project" value="TreeGrafter"/>
</dbReference>
<dbReference type="GO" id="GO:0090729">
    <property type="term" value="F:toxin activity"/>
    <property type="evidence" value="ECO:0007669"/>
    <property type="project" value="UniProtKB-KW"/>
</dbReference>
<dbReference type="GO" id="GO:0050482">
    <property type="term" value="P:arachidonate secretion"/>
    <property type="evidence" value="ECO:0007669"/>
    <property type="project" value="InterPro"/>
</dbReference>
<dbReference type="GO" id="GO:0016042">
    <property type="term" value="P:lipid catabolic process"/>
    <property type="evidence" value="ECO:0007669"/>
    <property type="project" value="UniProtKB-KW"/>
</dbReference>
<dbReference type="GO" id="GO:0006644">
    <property type="term" value="P:phospholipid metabolic process"/>
    <property type="evidence" value="ECO:0007669"/>
    <property type="project" value="InterPro"/>
</dbReference>
<dbReference type="CDD" id="cd00125">
    <property type="entry name" value="PLA2c"/>
    <property type="match status" value="1"/>
</dbReference>
<dbReference type="FunFam" id="1.20.90.10:FF:000007">
    <property type="entry name" value="Acidic phospholipase A2"/>
    <property type="match status" value="1"/>
</dbReference>
<dbReference type="Gene3D" id="1.20.90.10">
    <property type="entry name" value="Phospholipase A2 domain"/>
    <property type="match status" value="1"/>
</dbReference>
<dbReference type="InterPro" id="IPR001211">
    <property type="entry name" value="PLipase_A2"/>
</dbReference>
<dbReference type="InterPro" id="IPR033112">
    <property type="entry name" value="PLipase_A2_Asp_AS"/>
</dbReference>
<dbReference type="InterPro" id="IPR016090">
    <property type="entry name" value="PLipase_A2_dom"/>
</dbReference>
<dbReference type="InterPro" id="IPR036444">
    <property type="entry name" value="PLipase_A2_dom_sf"/>
</dbReference>
<dbReference type="InterPro" id="IPR033113">
    <property type="entry name" value="PLipase_A2_His_AS"/>
</dbReference>
<dbReference type="PANTHER" id="PTHR11716:SF100">
    <property type="entry name" value="PHOSPHOLIPASE A2"/>
    <property type="match status" value="1"/>
</dbReference>
<dbReference type="PANTHER" id="PTHR11716">
    <property type="entry name" value="PHOSPHOLIPASE A2 FAMILY MEMBER"/>
    <property type="match status" value="1"/>
</dbReference>
<dbReference type="Pfam" id="PF00068">
    <property type="entry name" value="Phospholip_A2_1"/>
    <property type="match status" value="1"/>
</dbReference>
<dbReference type="PRINTS" id="PR00389">
    <property type="entry name" value="PHPHLIPASEA2"/>
</dbReference>
<dbReference type="SMART" id="SM00085">
    <property type="entry name" value="PA2c"/>
    <property type="match status" value="1"/>
</dbReference>
<dbReference type="SUPFAM" id="SSF48619">
    <property type="entry name" value="Phospholipase A2, PLA2"/>
    <property type="match status" value="1"/>
</dbReference>
<dbReference type="PROSITE" id="PS00119">
    <property type="entry name" value="PA2_ASP"/>
    <property type="match status" value="1"/>
</dbReference>
<dbReference type="PROSITE" id="PS00118">
    <property type="entry name" value="PA2_HIS"/>
    <property type="match status" value="1"/>
</dbReference>
<organism>
    <name type="scientific">Bungarus multicinctus</name>
    <name type="common">Many-banded krait</name>
    <dbReference type="NCBI Taxonomy" id="8616"/>
    <lineage>
        <taxon>Eukaryota</taxon>
        <taxon>Metazoa</taxon>
        <taxon>Chordata</taxon>
        <taxon>Craniata</taxon>
        <taxon>Vertebrata</taxon>
        <taxon>Euteleostomi</taxon>
        <taxon>Lepidosauria</taxon>
        <taxon>Squamata</taxon>
        <taxon>Bifurcata</taxon>
        <taxon>Unidentata</taxon>
        <taxon>Episquamata</taxon>
        <taxon>Toxicofera</taxon>
        <taxon>Serpentes</taxon>
        <taxon>Colubroidea</taxon>
        <taxon>Elapidae</taxon>
        <taxon>Bungarinae</taxon>
        <taxon>Bungarus</taxon>
    </lineage>
</organism>
<name>PA2BD_BUNMU</name>
<accession>Q9PTA5</accession>
<feature type="signal peptide" evidence="2">
    <location>
        <begin position="1" status="less than"/>
        <end position="10"/>
    </location>
</feature>
<feature type="propeptide" id="PRO_0000462269" evidence="2">
    <location>
        <begin position="11"/>
        <end position="18"/>
    </location>
</feature>
<feature type="chain" id="PRO_0000022849" description="Basic phospholipase A2 beta-bungarotoxin A-AL4 chain" evidence="2">
    <location>
        <begin position="19"/>
        <end position="137"/>
    </location>
</feature>
<feature type="active site" evidence="3">
    <location>
        <position position="66"/>
    </location>
</feature>
<feature type="active site" evidence="3">
    <location>
        <position position="112"/>
    </location>
</feature>
<feature type="binding site" evidence="2">
    <location>
        <position position="46"/>
    </location>
    <ligand>
        <name>Ca(2+)</name>
        <dbReference type="ChEBI" id="CHEBI:29108"/>
    </ligand>
</feature>
<feature type="binding site" evidence="2">
    <location>
        <position position="48"/>
    </location>
    <ligand>
        <name>Ca(2+)</name>
        <dbReference type="ChEBI" id="CHEBI:29108"/>
    </ligand>
</feature>
<feature type="binding site" evidence="2">
    <location>
        <position position="50"/>
    </location>
    <ligand>
        <name>Ca(2+)</name>
        <dbReference type="ChEBI" id="CHEBI:29108"/>
    </ligand>
</feature>
<feature type="binding site" evidence="2">
    <location>
        <position position="67"/>
    </location>
    <ligand>
        <name>Ca(2+)</name>
        <dbReference type="ChEBI" id="CHEBI:29108"/>
    </ligand>
</feature>
<feature type="disulfide bond" description="Interchain (with a B chain)" evidence="2">
    <location>
        <position position="33"/>
    </location>
</feature>
<feature type="disulfide bond" evidence="2">
    <location>
        <begin position="45"/>
        <end position="137"/>
    </location>
</feature>
<feature type="disulfide bond" evidence="2">
    <location>
        <begin position="47"/>
        <end position="63"/>
    </location>
</feature>
<feature type="disulfide bond" evidence="2">
    <location>
        <begin position="62"/>
        <end position="118"/>
    </location>
</feature>
<feature type="disulfide bond" evidence="2">
    <location>
        <begin position="69"/>
        <end position="111"/>
    </location>
</feature>
<feature type="disulfide bond" evidence="2">
    <location>
        <begin position="79"/>
        <end position="104"/>
    </location>
</feature>
<feature type="disulfide bond" evidence="2">
    <location>
        <begin position="97"/>
        <end position="109"/>
    </location>
</feature>
<feature type="non-terminal residue" evidence="7">
    <location>
        <position position="1"/>
    </location>
</feature>
<sequence length="137" mass="15322">LAVCVSLLGAANIPPQHLNLCQFKEMIRYTIPCEKTWLEYTHYGCYCGYGGSGTPVDALDRCCYVHDNCYGDAEKKHKCNPKTQSYSYKLTKRTIICYDAAGTCARIVCDCDRTAALCFGNSEYIGAHKNIDTARYC</sequence>